<sequence length="558" mass="63111">MSAANPETPNSTISREASTQSSSAAASQGWVLPEGKIVPNTVFVGGIDARMDETEIGSCFGRYGSVKEVKIITNRTGVSKGYGFVSFVNDVDVQKIVGSQIHFHGKKLKLGPAIRKQKLCARHVQPRPLVVNPPPPPQFQNVWRNPNTETYLQPQITPNPVTQHVQAYSAYPHSPGQVITGCQLLVYNYQEYPTYPDSAFQVTTGYQLPVYNYQPFPAYPRSPFQVTAGYQLPVYNYQAFPAYPNSPFQVATGYQFPVYNYQPFPAYPSSPFQVTAGYQLPVYNYQAFPAYPNSPFQVATGYQFPVYNYQAFPAYPNSPVQVTTGYQLPVYNYQAFPAYPNSPVQVTTGYQLPVYNYQAFPAYPSSPFQVTTGYQLPVYNYQAFPAYPSSPFQVTTGYQLPVYNYQAFPAYPSSPFQVTTGYQLPVYNYQAFPAYPSSPFQVTTGYQLPVYNYQAFPAYPSSPFQVTTGYQLPVYNYQAFPAYPSSPFQVTTGYQLPVYNYQAFPAYPNSAVQVTTGYQFHVYNYQMPPQCPVGEQRRNLWTEAYKWWYLVCLIQRRD</sequence>
<evidence type="ECO:0000255" key="1">
    <source>
        <dbReference type="PROSITE-ProRule" id="PRU00176"/>
    </source>
</evidence>
<evidence type="ECO:0000255" key="2">
    <source>
        <dbReference type="PROSITE-ProRule" id="PRU01238"/>
    </source>
</evidence>
<evidence type="ECO:0000256" key="3">
    <source>
        <dbReference type="SAM" id="MobiDB-lite"/>
    </source>
</evidence>
<evidence type="ECO:0000269" key="4">
    <source>
    </source>
</evidence>
<evidence type="ECO:0000269" key="5">
    <source>
    </source>
</evidence>
<evidence type="ECO:0000269" key="6">
    <source>
    </source>
</evidence>
<evidence type="ECO:0000269" key="7">
    <source>
    </source>
</evidence>
<evidence type="ECO:0000269" key="8">
    <source>
    </source>
</evidence>
<evidence type="ECO:0000269" key="9">
    <source>
    </source>
</evidence>
<evidence type="ECO:0000269" key="10">
    <source>
    </source>
</evidence>
<evidence type="ECO:0000269" key="11">
    <source>
    </source>
</evidence>
<evidence type="ECO:0000269" key="12">
    <source>
    </source>
</evidence>
<evidence type="ECO:0000269" key="13">
    <source>
    </source>
</evidence>
<evidence type="ECO:0000303" key="14">
    <source>
    </source>
</evidence>
<evidence type="ECO:0000303" key="15">
    <source>
    </source>
</evidence>
<evidence type="ECO:0000303" key="16">
    <source ref="3"/>
</evidence>
<evidence type="ECO:0000305" key="17"/>
<evidence type="ECO:0000305" key="18">
    <source>
    </source>
</evidence>
<name>DAZ2_HUMAN</name>
<organism>
    <name type="scientific">Homo sapiens</name>
    <name type="common">Human</name>
    <dbReference type="NCBI Taxonomy" id="9606"/>
    <lineage>
        <taxon>Eukaryota</taxon>
        <taxon>Metazoa</taxon>
        <taxon>Chordata</taxon>
        <taxon>Craniata</taxon>
        <taxon>Vertebrata</taxon>
        <taxon>Euteleostomi</taxon>
        <taxon>Mammalia</taxon>
        <taxon>Eutheria</taxon>
        <taxon>Euarchontoglires</taxon>
        <taxon>Primates</taxon>
        <taxon>Haplorrhini</taxon>
        <taxon>Catarrhini</taxon>
        <taxon>Hominidae</taxon>
        <taxon>Homo</taxon>
    </lineage>
</organism>
<comment type="function">
    <text>RNA-binding protein that plays an essential role in spermatogenesis. May act by binding to the 3'-UTR of mRNAs and regulating their translation.</text>
</comment>
<comment type="subunit">
    <text evidence="4 5 9 11">Forms a heterodimer with BOLL and DAZL. Interacts with PUM2, DAZAP1, DAZAP2, DZIP1 and DZIP3.</text>
</comment>
<comment type="interaction">
    <interactant intactId="EBI-13357576">
        <id>Q13117-3</id>
    </interactant>
    <interactant intactId="EBI-930964">
        <id>P54253</id>
        <label>ATXN1</label>
    </interactant>
    <organismsDiffer>false</organismsDiffer>
    <experiments>3</experiments>
</comment>
<comment type="subcellular location">
    <subcellularLocation>
        <location evidence="7 13">Cytoplasm</location>
    </subcellularLocation>
    <subcellularLocation>
        <location evidence="7">Nucleus</location>
    </subcellularLocation>
    <text>Predominantly cytoplasmic. Nuclear at some stages of spermatozoide development. Localizes both to the nuclei and cytoplasm of spermatozoide differentiation. Nuclear in fetal gonocytes and in spermatogonial nuclei. It then relocates to the cytoplasm during male meiosis.</text>
</comment>
<comment type="alternative products">
    <event type="alternative splicing"/>
    <isoform>
        <id>Q13117-1</id>
        <name>1</name>
        <sequence type="displayed"/>
    </isoform>
    <isoform>
        <id>Q13117-2</id>
        <name>2</name>
        <sequence type="described" ref="VSP_009452"/>
    </isoform>
    <isoform>
        <id>Q13117-3</id>
        <name>3</name>
        <sequence type="described" ref="VSP_009453"/>
    </isoform>
</comment>
<comment type="tissue specificity">
    <text evidence="6">Testis specific.</text>
</comment>
<comment type="domain">
    <text>The DAZ domains are essential and mediate the interaction with DAZAP1 and DAZAP2.</text>
</comment>
<comment type="polymorphism">
    <text evidence="18">The number as well as the precise structure of the DAZ proteins probably differs within the population.</text>
</comment>
<comment type="disease" evidence="8 10 12">
    <disease id="DI-02062">
        <name>Spermatogenic failure Y-linked 2</name>
        <acronym>SPGFY2</acronym>
        <description>A disorder resulting in the absence (azoospermia) or reduction (oligozoospermia) of sperm in the semen, leading to male infertility.</description>
        <dbReference type="MIM" id="415000"/>
    </disease>
    <text>The disease may be caused by variants affecting the gene represented in this entry. AZFc deletions in the Yq11.23 region including the DAZ genes are the most common known genetic cause of human male infertility.</text>
</comment>
<comment type="miscellaneous">
    <text>The DAZ proteins (DAZ, DAZ2, DAZ4 and DAZ4) are all encoded by a strongly repeated region of the Y chromosome, in two clusters each comprising an inverted pair of DAZ genes. They are very similar, which gives their indidual characterization difficult. Thus, most experiments do not discriminate between the different members. One can therefore suppose that reported interactions with a DAZ protein involve all the 4 proteins.</text>
</comment>
<comment type="similarity">
    <text evidence="2">Belongs to the RRM DAZ family.</text>
</comment>
<gene>
    <name type="primary">DAZ2</name>
</gene>
<protein>
    <recommendedName>
        <fullName>Deleted in azoospermia protein 2</fullName>
    </recommendedName>
</protein>
<accession>Q13117</accession>
<accession>Q2KHN6</accession>
<accession>Q96P41</accession>
<accession>Q9NR91</accession>
<feature type="chain" id="PRO_0000081555" description="Deleted in azoospermia protein 2">
    <location>
        <begin position="1"/>
        <end position="558"/>
    </location>
</feature>
<feature type="domain" description="RRM" evidence="1">
    <location>
        <begin position="40"/>
        <end position="115"/>
    </location>
</feature>
<feature type="domain" description="DAZ 1" evidence="2">
    <location>
        <begin position="167"/>
        <end position="190"/>
    </location>
</feature>
<feature type="domain" description="DAZ 2" evidence="2">
    <location>
        <begin position="191"/>
        <end position="214"/>
    </location>
</feature>
<feature type="domain" description="DAZ 3" evidence="2">
    <location>
        <begin position="215"/>
        <end position="238"/>
    </location>
</feature>
<feature type="domain" description="DAZ 4" evidence="2">
    <location>
        <begin position="239"/>
        <end position="262"/>
    </location>
</feature>
<feature type="domain" description="DAZ 5" evidence="2">
    <location>
        <begin position="263"/>
        <end position="286"/>
    </location>
</feature>
<feature type="domain" description="DAZ 6" evidence="2">
    <location>
        <begin position="287"/>
        <end position="310"/>
    </location>
</feature>
<feature type="domain" description="DAZ 7" evidence="2">
    <location>
        <begin position="311"/>
        <end position="334"/>
    </location>
</feature>
<feature type="domain" description="DAZ 8" evidence="2">
    <location>
        <begin position="335"/>
        <end position="358"/>
    </location>
</feature>
<feature type="domain" description="DAZ 9" evidence="2">
    <location>
        <begin position="359"/>
        <end position="382"/>
    </location>
</feature>
<feature type="domain" description="DAZ 10" evidence="2">
    <location>
        <begin position="383"/>
        <end position="406"/>
    </location>
</feature>
<feature type="domain" description="DAZ 11" evidence="2">
    <location>
        <begin position="407"/>
        <end position="430"/>
    </location>
</feature>
<feature type="domain" description="DAZ 12" evidence="2">
    <location>
        <begin position="431"/>
        <end position="454"/>
    </location>
</feature>
<feature type="domain" description="DAZ 13" evidence="2">
    <location>
        <begin position="455"/>
        <end position="478"/>
    </location>
</feature>
<feature type="domain" description="DAZ 14" evidence="2">
    <location>
        <begin position="479"/>
        <end position="502"/>
    </location>
</feature>
<feature type="domain" description="DAZ 15" evidence="2">
    <location>
        <begin position="503"/>
        <end position="526"/>
    </location>
</feature>
<feature type="region of interest" description="Disordered" evidence="3">
    <location>
        <begin position="1"/>
        <end position="27"/>
    </location>
</feature>
<feature type="compositionally biased region" description="Polar residues" evidence="3">
    <location>
        <begin position="1"/>
        <end position="10"/>
    </location>
</feature>
<feature type="compositionally biased region" description="Low complexity" evidence="3">
    <location>
        <begin position="11"/>
        <end position="27"/>
    </location>
</feature>
<feature type="splice variant" id="VSP_009452" description="In isoform 2." evidence="15">
    <location>
        <begin position="198"/>
        <end position="389"/>
    </location>
</feature>
<feature type="splice variant" id="VSP_009453" description="In isoform 3." evidence="14 16">
    <location>
        <begin position="321"/>
        <end position="344"/>
    </location>
</feature>
<feature type="sequence conflict" description="In Ref. 2; AAF91329." evidence="17" ref="2">
    <original>N</original>
    <variation>S</variation>
    <location>
        <position position="341"/>
    </location>
</feature>
<feature type="sequence conflict" description="In Ref. 2; AAF91329." evidence="17" ref="2">
    <original>V</original>
    <variation>F</variation>
    <location>
        <position position="344"/>
    </location>
</feature>
<feature type="sequence conflict" description="In Ref. 1; AAB02393." evidence="17" ref="1">
    <original>A</original>
    <variation>P</variation>
    <location>
        <position position="407"/>
    </location>
</feature>
<feature type="sequence conflict" description="In Ref. 1; AAB02393." evidence="17" ref="1">
    <original>T</original>
    <variation>A</variation>
    <location>
        <position position="420"/>
    </location>
</feature>
<keyword id="KW-0025">Alternative splicing</keyword>
<keyword id="KW-0963">Cytoplasm</keyword>
<keyword id="KW-0217">Developmental protein</keyword>
<keyword id="KW-0221">Differentiation</keyword>
<keyword id="KW-0539">Nucleus</keyword>
<keyword id="KW-1185">Reference proteome</keyword>
<keyword id="KW-0677">Repeat</keyword>
<keyword id="KW-0694">RNA-binding</keyword>
<keyword id="KW-0744">Spermatogenesis</keyword>
<dbReference type="EMBL" id="U21663">
    <property type="protein sequence ID" value="AAB02393.1"/>
    <property type="molecule type" value="mRNA"/>
</dbReference>
<dbReference type="EMBL" id="AF248480">
    <property type="protein sequence ID" value="AAF91329.1"/>
    <property type="molecule type" value="mRNA"/>
</dbReference>
<dbReference type="EMBL" id="AF414184">
    <property type="protein sequence ID" value="AAL24502.1"/>
    <property type="molecule type" value="mRNA"/>
</dbReference>
<dbReference type="EMBL" id="AC006338">
    <property type="status" value="NOT_ANNOTATED_CDS"/>
    <property type="molecule type" value="Genomic_DNA"/>
</dbReference>
<dbReference type="EMBL" id="BC113006">
    <property type="protein sequence ID" value="AAI13007.1"/>
    <property type="molecule type" value="mRNA"/>
</dbReference>
<dbReference type="PIR" id="I38963">
    <property type="entry name" value="I38963"/>
</dbReference>
<dbReference type="RefSeq" id="NP_001005785.1">
    <molecule id="Q13117-3"/>
    <property type="nucleotide sequence ID" value="NM_001005785.2"/>
</dbReference>
<dbReference type="RefSeq" id="NP_001005786.2">
    <property type="nucleotide sequence ID" value="NM_001005786.2"/>
</dbReference>
<dbReference type="RefSeq" id="NP_065096.2">
    <molecule id="Q13117-1"/>
    <property type="nucleotide sequence ID" value="NM_020363.3"/>
</dbReference>
<dbReference type="BioGRID" id="121347">
    <property type="interactions" value="31"/>
</dbReference>
<dbReference type="FunCoup" id="Q13117">
    <property type="interactions" value="2"/>
</dbReference>
<dbReference type="IntAct" id="Q13117">
    <property type="interactions" value="21"/>
</dbReference>
<dbReference type="STRING" id="9606.ENSP00000371802"/>
<dbReference type="iPTMnet" id="Q13117"/>
<dbReference type="PhosphoSitePlus" id="Q13117"/>
<dbReference type="BioMuta" id="DAZ2"/>
<dbReference type="DMDM" id="218512098"/>
<dbReference type="MassIVE" id="Q13117"/>
<dbReference type="PeptideAtlas" id="Q13117"/>
<dbReference type="Antibodypedia" id="21892">
    <property type="antibodies" value="110 antibodies from 20 providers"/>
</dbReference>
<dbReference type="DNASU" id="57055"/>
<dbReference type="Ensembl" id="ENST00000382433.4">
    <molecule id="Q13117-1"/>
    <property type="protein sequence ID" value="ENSP00000371870.4"/>
    <property type="gene ID" value="ENSG00000205944.12"/>
</dbReference>
<dbReference type="Ensembl" id="ENST00000382449.5">
    <molecule id="Q13117-3"/>
    <property type="protein sequence ID" value="ENSP00000371887.1"/>
    <property type="gene ID" value="ENSG00000205944.12"/>
</dbReference>
<dbReference type="GeneID" id="57055"/>
<dbReference type="KEGG" id="hsa:57055"/>
<dbReference type="UCSC" id="uc022con.2">
    <molecule id="Q13117-1"/>
    <property type="organism name" value="human"/>
</dbReference>
<dbReference type="AGR" id="HGNC:15964"/>
<dbReference type="CTD" id="57055"/>
<dbReference type="DisGeNET" id="57055"/>
<dbReference type="GeneCards" id="DAZ2"/>
<dbReference type="GeneReviews" id="DAZ2"/>
<dbReference type="HGNC" id="HGNC:15964">
    <property type="gene designation" value="DAZ2"/>
</dbReference>
<dbReference type="HPA" id="ENSG00000205944">
    <property type="expression patterns" value="Group enriched (stomach, testis)"/>
</dbReference>
<dbReference type="MalaCards" id="DAZ2"/>
<dbReference type="MIM" id="400026">
    <property type="type" value="gene"/>
</dbReference>
<dbReference type="MIM" id="415000">
    <property type="type" value="phenotype"/>
</dbReference>
<dbReference type="neXtProt" id="NX_Q13117"/>
<dbReference type="OpenTargets" id="ENSG00000205944"/>
<dbReference type="Orphanet" id="1646">
    <property type="disease" value="Chromosome Y microdeletion syndrome"/>
</dbReference>
<dbReference type="PharmGKB" id="PA27150"/>
<dbReference type="VEuPathDB" id="HostDB:ENSG00000205944"/>
<dbReference type="GeneTree" id="ENSGT00530000063480"/>
<dbReference type="InParanoid" id="Q13117"/>
<dbReference type="PAN-GO" id="Q13117">
    <property type="GO annotations" value="5 GO annotations based on evolutionary models"/>
</dbReference>
<dbReference type="PhylomeDB" id="Q13117"/>
<dbReference type="TreeFam" id="TF324396"/>
<dbReference type="PathwayCommons" id="Q13117"/>
<dbReference type="SignaLink" id="Q13117"/>
<dbReference type="BioGRID-ORCS" id="57055">
    <property type="hits" value="11 hits in 211 CRISPR screens"/>
</dbReference>
<dbReference type="ChiTaRS" id="DAZ2">
    <property type="organism name" value="human"/>
</dbReference>
<dbReference type="GeneWiki" id="DAZ2"/>
<dbReference type="GenomeRNAi" id="57055"/>
<dbReference type="Pharos" id="Q13117">
    <property type="development level" value="Tbio"/>
</dbReference>
<dbReference type="PRO" id="PR:Q13117"/>
<dbReference type="Proteomes" id="UP000005640">
    <property type="component" value="Chromosome Y"/>
</dbReference>
<dbReference type="RNAct" id="Q13117">
    <property type="molecule type" value="protein"/>
</dbReference>
<dbReference type="Bgee" id="ENSG00000205944">
    <property type="expression patterns" value="Expressed in primordial germ cell in gonad and 17 other cell types or tissues"/>
</dbReference>
<dbReference type="ExpressionAtlas" id="Q13117">
    <property type="expression patterns" value="baseline"/>
</dbReference>
<dbReference type="GO" id="GO:0005737">
    <property type="term" value="C:cytoplasm"/>
    <property type="evidence" value="ECO:0000314"/>
    <property type="project" value="UniProtKB"/>
</dbReference>
<dbReference type="GO" id="GO:0005634">
    <property type="term" value="C:nucleus"/>
    <property type="evidence" value="ECO:0007669"/>
    <property type="project" value="UniProtKB-SubCell"/>
</dbReference>
<dbReference type="GO" id="GO:0032991">
    <property type="term" value="C:protein-containing complex"/>
    <property type="evidence" value="ECO:0000314"/>
    <property type="project" value="UniProtKB"/>
</dbReference>
<dbReference type="GO" id="GO:0003730">
    <property type="term" value="F:mRNA 3'-UTR binding"/>
    <property type="evidence" value="ECO:0000318"/>
    <property type="project" value="GO_Central"/>
</dbReference>
<dbReference type="GO" id="GO:0003723">
    <property type="term" value="F:RNA binding"/>
    <property type="evidence" value="ECO:0000304"/>
    <property type="project" value="ProtInc"/>
</dbReference>
<dbReference type="GO" id="GO:0008494">
    <property type="term" value="F:translation activator activity"/>
    <property type="evidence" value="ECO:0000318"/>
    <property type="project" value="GO_Central"/>
</dbReference>
<dbReference type="GO" id="GO:0070935">
    <property type="term" value="P:3'-UTR-mediated mRNA stabilization"/>
    <property type="evidence" value="ECO:0000318"/>
    <property type="project" value="GO_Central"/>
</dbReference>
<dbReference type="GO" id="GO:0030154">
    <property type="term" value="P:cell differentiation"/>
    <property type="evidence" value="ECO:0007669"/>
    <property type="project" value="UniProtKB-KW"/>
</dbReference>
<dbReference type="GO" id="GO:0045948">
    <property type="term" value="P:positive regulation of translational initiation"/>
    <property type="evidence" value="ECO:0000318"/>
    <property type="project" value="GO_Central"/>
</dbReference>
<dbReference type="GO" id="GO:0007338">
    <property type="term" value="P:single fertilization"/>
    <property type="evidence" value="ECO:0000304"/>
    <property type="project" value="ProtInc"/>
</dbReference>
<dbReference type="GO" id="GO:0007283">
    <property type="term" value="P:spermatogenesis"/>
    <property type="evidence" value="ECO:0007669"/>
    <property type="project" value="UniProtKB-KW"/>
</dbReference>
<dbReference type="CDD" id="cd12672">
    <property type="entry name" value="RRM_DAZL"/>
    <property type="match status" value="1"/>
</dbReference>
<dbReference type="FunFam" id="3.30.70.330:FF:000180">
    <property type="entry name" value="Deleted in azoospermia-like"/>
    <property type="match status" value="1"/>
</dbReference>
<dbReference type="Gene3D" id="3.30.70.330">
    <property type="match status" value="1"/>
</dbReference>
<dbReference type="InterPro" id="IPR043628">
    <property type="entry name" value="DAZ_dom"/>
</dbReference>
<dbReference type="InterPro" id="IPR037551">
    <property type="entry name" value="DAZ_RRM_vert"/>
</dbReference>
<dbReference type="InterPro" id="IPR012677">
    <property type="entry name" value="Nucleotide-bd_a/b_plait_sf"/>
</dbReference>
<dbReference type="InterPro" id="IPR035979">
    <property type="entry name" value="RBD_domain_sf"/>
</dbReference>
<dbReference type="InterPro" id="IPR000504">
    <property type="entry name" value="RRM_dom"/>
</dbReference>
<dbReference type="PANTHER" id="PTHR11176">
    <property type="entry name" value="BOULE-RELATED"/>
    <property type="match status" value="1"/>
</dbReference>
<dbReference type="PANTHER" id="PTHR11176:SF8">
    <property type="entry name" value="DELETED IN AZOOSPERMIA PROTEIN 1-RELATED"/>
    <property type="match status" value="1"/>
</dbReference>
<dbReference type="Pfam" id="PF18872">
    <property type="entry name" value="Daz"/>
    <property type="match status" value="15"/>
</dbReference>
<dbReference type="Pfam" id="PF00076">
    <property type="entry name" value="RRM_1"/>
    <property type="match status" value="1"/>
</dbReference>
<dbReference type="SMART" id="SM00360">
    <property type="entry name" value="RRM"/>
    <property type="match status" value="1"/>
</dbReference>
<dbReference type="SUPFAM" id="SSF54928">
    <property type="entry name" value="RNA-binding domain, RBD"/>
    <property type="match status" value="1"/>
</dbReference>
<dbReference type="PROSITE" id="PS51890">
    <property type="entry name" value="DAZ"/>
    <property type="match status" value="15"/>
</dbReference>
<dbReference type="PROSITE" id="PS50102">
    <property type="entry name" value="RRM"/>
    <property type="match status" value="1"/>
</dbReference>
<reference key="1">
    <citation type="journal article" date="1995" name="Nat. Genet.">
        <title>Diverse spermatogenic defects in humans caused by Y chromosome deletions encompassing a novel RNA-binding protein gene.</title>
        <authorList>
            <person name="Reijo R.A."/>
            <person name="Lee T.Y."/>
            <person name="Salo P."/>
            <person name="Alagappan R."/>
            <person name="Brown L.G."/>
            <person name="Rosenberg M."/>
            <person name="Rozen S."/>
            <person name="Jaffe T."/>
            <person name="Straus D."/>
            <person name="Hovatta O."/>
            <person name="de la Chapelle A."/>
            <person name="Silber S."/>
            <person name="Page D.C."/>
        </authorList>
    </citation>
    <scope>NUCLEOTIDE SEQUENCE [MRNA] (ISOFORM 2)</scope>
    <source>
        <tissue>Testis</tissue>
    </source>
</reference>
<reference key="2">
    <citation type="journal article" date="2000" name="Genomics">
        <title>Four DAZ genes in two clusters found in the AZFc region of the human Y chromosome.</title>
        <authorList>
            <person name="Saxena R."/>
            <person name="de Vries J.W.A."/>
            <person name="Repping S."/>
            <person name="Alagappan R.K."/>
            <person name="Skaletsky H."/>
            <person name="Brown L.G."/>
            <person name="Ma P."/>
            <person name="Chen E."/>
            <person name="Hoovers J.M.N."/>
            <person name="Page D.C."/>
        </authorList>
    </citation>
    <scope>NUCLEOTIDE SEQUENCE [MRNA] (ISOFORM 1)</scope>
    <scope>GENE STRUCTURE</scope>
    <scope>GENE NOMENCLATURE</scope>
    <scope>TISSUE SPECIFICITY</scope>
    <source>
        <tissue>Testis</tissue>
    </source>
</reference>
<reference key="3">
    <citation type="submission" date="2001-08" db="EMBL/GenBank/DDBJ databases">
        <title>DAZ2 gene testicular transcript with 14 exon 7 variants expressed in human testicular tissue.</title>
        <authorList>
            <person name="Vogt P.H."/>
            <person name="Hirschmann P."/>
        </authorList>
    </citation>
    <scope>NUCLEOTIDE SEQUENCE [MRNA] (ISOFORM 3)</scope>
    <source>
        <tissue>Testis</tissue>
    </source>
</reference>
<reference key="4">
    <citation type="journal article" date="2003" name="Nature">
        <title>The male-specific region of the human Y chromosome is a mosaic of discrete sequence classes.</title>
        <authorList>
            <person name="Skaletsky H."/>
            <person name="Kuroda-Kawaguchi T."/>
            <person name="Minx P.J."/>
            <person name="Cordum H.S."/>
            <person name="Hillier L.W."/>
            <person name="Brown L.G."/>
            <person name="Repping S."/>
            <person name="Pyntikova T."/>
            <person name="Ali J."/>
            <person name="Bieri T."/>
            <person name="Chinwalla A."/>
            <person name="Delehaunty A."/>
            <person name="Delehaunty K."/>
            <person name="Du H."/>
            <person name="Fewell G."/>
            <person name="Fulton L."/>
            <person name="Fulton R."/>
            <person name="Graves T.A."/>
            <person name="Hou S.-F."/>
            <person name="Latrielle P."/>
            <person name="Leonard S."/>
            <person name="Mardis E."/>
            <person name="Maupin R."/>
            <person name="McPherson J."/>
            <person name="Miner T."/>
            <person name="Nash W."/>
            <person name="Nguyen C."/>
            <person name="Ozersky P."/>
            <person name="Pepin K."/>
            <person name="Rock S."/>
            <person name="Rohlfing T."/>
            <person name="Scott K."/>
            <person name="Schultz B."/>
            <person name="Strong C."/>
            <person name="Tin-Wollam A."/>
            <person name="Yang S.-P."/>
            <person name="Waterston R.H."/>
            <person name="Wilson R.K."/>
            <person name="Rozen S."/>
            <person name="Page D.C."/>
        </authorList>
    </citation>
    <scope>NUCLEOTIDE SEQUENCE [LARGE SCALE GENOMIC DNA]</scope>
</reference>
<reference key="5">
    <citation type="journal article" date="2004" name="Genome Res.">
        <title>The status, quality, and expansion of the NIH full-length cDNA project: the Mammalian Gene Collection (MGC).</title>
        <authorList>
            <consortium name="The MGC Project Team"/>
        </authorList>
    </citation>
    <scope>NUCLEOTIDE SEQUENCE [LARGE SCALE MRNA] (ISOFORM 3)</scope>
</reference>
<reference key="6">
    <citation type="journal article" date="2000" name="Genomics">
        <title>Identification of two novel proteins that interact with germ-cell-specific RNA-binding proteins DAZ and DAZL1.</title>
        <authorList>
            <person name="Tsui S."/>
            <person name="Dai T."/>
            <person name="Roettger S."/>
            <person name="Schempp W."/>
            <person name="Salido E.C."/>
            <person name="Yen P.H."/>
        </authorList>
    </citation>
    <scope>INTERACTION WITH DAZAP1 AND DAZAP2</scope>
</reference>
<reference key="7">
    <citation type="journal article" date="2000" name="Biol. Reprod.">
        <title>DAZ family proteins exist throughout male germ cell development and transit from nucleus to cytoplasm at meiosis in humans and mice.</title>
        <authorList>
            <person name="Reijo R.A."/>
            <person name="Dorfman D.M."/>
            <person name="Slee R."/>
            <person name="Renshaw A.A."/>
            <person name="Loughlin K.R."/>
            <person name="Cooke H."/>
            <person name="Page D.C."/>
        </authorList>
    </citation>
    <scope>SUBCELLULAR LOCATION</scope>
</reference>
<reference key="8">
    <citation type="journal article" date="2000" name="Gene">
        <title>In vivo and in vitro analysis of homodimerisation activity of the mouse Dazl1 protein.</title>
        <authorList>
            <person name="Ruggiu M."/>
            <person name="Cooke H.J."/>
        </authorList>
    </citation>
    <scope>INTERACTION WITH DAZL</scope>
</reference>
<reference key="9">
    <citation type="journal article" date="2001" name="Proc. Natl. Acad. Sci. U.S.A.">
        <title>A gene family required for human germ cell development evolved from an ancient meiotic gene conserved in metazoans.</title>
        <authorList>
            <person name="Xu E.Y."/>
            <person name="Moore F.L."/>
            <person name="Reijo Pera R.A."/>
        </authorList>
    </citation>
    <scope>INTERACTION WITH BOLL</scope>
</reference>
<reference key="10">
    <citation type="journal article" date="2003" name="Proc. Natl. Acad. Sci. U.S.A.">
        <title>Human Pumilio-2 is expressed in embryonic stem cells and germ cells and interacts with DAZ (Deleted in AZoospermia) and DAZ-like proteins.</title>
        <authorList>
            <person name="Moore F.L."/>
            <person name="Jaruzelska J."/>
            <person name="Fox M.S."/>
            <person name="Urano J."/>
            <person name="Firpo M.T."/>
            <person name="Turek P.J."/>
            <person name="Dorfman D.M."/>
            <person name="Reijo Pera R.A."/>
        </authorList>
    </citation>
    <scope>INTERACTION WITH PUM2; DZIP1 AND DZIP3</scope>
</reference>
<reference key="11">
    <citation type="journal article" date="2003" name="APMIS">
        <title>Polymorphic DAZ gene family in polymorphic structure of AZFc locus: artwork or functional for human spermatogenesis?</title>
        <authorList>
            <person name="Vogt P.H."/>
            <person name="Fernandes S."/>
        </authorList>
    </citation>
    <scope>REVIEW</scope>
</reference>
<reference key="12">
    <citation type="journal article" date="2000" name="J. Clin. Endocrinol. Metab.">
        <title>Male infertility caused by a de novo partial deletion of the DAZ cluster on the Y chromosome.</title>
        <authorList>
            <person name="Moro E."/>
            <person name="Ferlin A."/>
            <person name="Yen P.H."/>
            <person name="Franchi P.G."/>
            <person name="Palka G."/>
            <person name="Foresta C."/>
        </authorList>
    </citation>
    <scope>INVOLVEMENT IN SPGFY2</scope>
</reference>
<reference key="13">
    <citation type="journal article" date="2002" name="Mol. Hum. Reprod.">
        <title>High frequency of DAZ1/DAZ2 gene deletions in patients with severe oligozoospermia.</title>
        <authorList>
            <person name="Fernandes S."/>
            <person name="Huellen K."/>
            <person name="Goncalves J."/>
            <person name="Dukal H."/>
            <person name="Zeisler J."/>
            <person name="Rajpert De Meyts E."/>
            <person name="Skakkebaek N.E."/>
            <person name="Habermann B."/>
            <person name="Krause W."/>
            <person name="Sousa M."/>
            <person name="Barros A."/>
            <person name="Vogt P.H."/>
        </authorList>
    </citation>
    <scope>INVOLVEMENT IN SPGFY2</scope>
</reference>
<reference key="14">
    <citation type="journal article" date="2003" name="Fertil. Steril.">
        <title>Partial DAZ deletions in a family with five infertile brothers.</title>
        <authorList>
            <person name="Gianotten J."/>
            <person name="Hoffer M.J.V."/>
            <person name="De Vries J.W.A."/>
            <person name="Leschot N.J."/>
            <person name="Gerris J."/>
            <person name="van der Veen F."/>
        </authorList>
    </citation>
    <scope>INVOLVEMENT IN SPGFY2</scope>
</reference>
<reference key="15">
    <citation type="journal article" date="2019" name="J. Proteome Res.">
        <title>Cell Type-Specific Expression of Testis Elevated Genes Based on Transcriptomics and Antibody-Based Proteomics.</title>
        <authorList>
            <person name="Pineau C."/>
            <person name="Hikmet F."/>
            <person name="Zhang C."/>
            <person name="Oksvold P."/>
            <person name="Chen S."/>
            <person name="Fagerberg L."/>
            <person name="Uhlen M."/>
            <person name="Lindskog C."/>
        </authorList>
    </citation>
    <scope>SUBCELLULAR LOCATION</scope>
</reference>
<proteinExistence type="evidence at protein level"/>